<gene>
    <name evidence="1" type="primary">gatB</name>
    <name type="ordered locus">SPJ_0420</name>
</gene>
<reference key="1">
    <citation type="journal article" date="2010" name="Genome Biol.">
        <title>Structure and dynamics of the pan-genome of Streptococcus pneumoniae and closely related species.</title>
        <authorList>
            <person name="Donati C."/>
            <person name="Hiller N.L."/>
            <person name="Tettelin H."/>
            <person name="Muzzi A."/>
            <person name="Croucher N.J."/>
            <person name="Angiuoli S.V."/>
            <person name="Oggioni M."/>
            <person name="Dunning Hotopp J.C."/>
            <person name="Hu F.Z."/>
            <person name="Riley D.R."/>
            <person name="Covacci A."/>
            <person name="Mitchell T.J."/>
            <person name="Bentley S.D."/>
            <person name="Kilian M."/>
            <person name="Ehrlich G.D."/>
            <person name="Rappuoli R."/>
            <person name="Moxon E.R."/>
            <person name="Masignani V."/>
        </authorList>
    </citation>
    <scope>NUCLEOTIDE SEQUENCE [LARGE SCALE GENOMIC DNA]</scope>
    <source>
        <strain>JJA</strain>
    </source>
</reference>
<evidence type="ECO:0000255" key="1">
    <source>
        <dbReference type="HAMAP-Rule" id="MF_00121"/>
    </source>
</evidence>
<comment type="function">
    <text evidence="1">Allows the formation of correctly charged Asn-tRNA(Asn) or Gln-tRNA(Gln) through the transamidation of misacylated Asp-tRNA(Asn) or Glu-tRNA(Gln) in organisms which lack either or both of asparaginyl-tRNA or glutaminyl-tRNA synthetases. The reaction takes place in the presence of glutamine and ATP through an activated phospho-Asp-tRNA(Asn) or phospho-Glu-tRNA(Gln).</text>
</comment>
<comment type="catalytic activity">
    <reaction evidence="1">
        <text>L-glutamyl-tRNA(Gln) + L-glutamine + ATP + H2O = L-glutaminyl-tRNA(Gln) + L-glutamate + ADP + phosphate + H(+)</text>
        <dbReference type="Rhea" id="RHEA:17521"/>
        <dbReference type="Rhea" id="RHEA-COMP:9681"/>
        <dbReference type="Rhea" id="RHEA-COMP:9684"/>
        <dbReference type="ChEBI" id="CHEBI:15377"/>
        <dbReference type="ChEBI" id="CHEBI:15378"/>
        <dbReference type="ChEBI" id="CHEBI:29985"/>
        <dbReference type="ChEBI" id="CHEBI:30616"/>
        <dbReference type="ChEBI" id="CHEBI:43474"/>
        <dbReference type="ChEBI" id="CHEBI:58359"/>
        <dbReference type="ChEBI" id="CHEBI:78520"/>
        <dbReference type="ChEBI" id="CHEBI:78521"/>
        <dbReference type="ChEBI" id="CHEBI:456216"/>
    </reaction>
</comment>
<comment type="catalytic activity">
    <reaction evidence="1">
        <text>L-aspartyl-tRNA(Asn) + L-glutamine + ATP + H2O = L-asparaginyl-tRNA(Asn) + L-glutamate + ADP + phosphate + 2 H(+)</text>
        <dbReference type="Rhea" id="RHEA:14513"/>
        <dbReference type="Rhea" id="RHEA-COMP:9674"/>
        <dbReference type="Rhea" id="RHEA-COMP:9677"/>
        <dbReference type="ChEBI" id="CHEBI:15377"/>
        <dbReference type="ChEBI" id="CHEBI:15378"/>
        <dbReference type="ChEBI" id="CHEBI:29985"/>
        <dbReference type="ChEBI" id="CHEBI:30616"/>
        <dbReference type="ChEBI" id="CHEBI:43474"/>
        <dbReference type="ChEBI" id="CHEBI:58359"/>
        <dbReference type="ChEBI" id="CHEBI:78515"/>
        <dbReference type="ChEBI" id="CHEBI:78516"/>
        <dbReference type="ChEBI" id="CHEBI:456216"/>
    </reaction>
</comment>
<comment type="subunit">
    <text evidence="1">Heterotrimer of A, B and C subunits.</text>
</comment>
<comment type="similarity">
    <text evidence="1">Belongs to the GatB/GatE family. GatB subfamily.</text>
</comment>
<feature type="chain" id="PRO_1000122539" description="Aspartyl/glutamyl-tRNA(Asn/Gln) amidotransferase subunit B">
    <location>
        <begin position="1"/>
        <end position="480"/>
    </location>
</feature>
<sequence length="480" mass="53658">MNFETVIGLEVHVELNTNSKIFSPTSAHFGNDQNANTNVIDWSFPGVLPVLNKGVVDAGIKAALALNMDIHKKMHFDRKNYFYPDNPKAYQISQFDEPIGYNGWIEVKLEDGTTKKIGIERAHLEEDAGKNTHGTDGYSYVDLNRQGVPLIEIVSEADMRSPEEAYAYLTALKEVIQYAGISDVKMEEGSMRVDANISLRPYGQEKFGTKTELKNLNSFSNVRKGLEYEVQRQAEILRSGGQIRQETRRYDEANKATILMRVKEGAADYRYFPEPDLPLFEISDEWIEEMRTELPEFPKERRARYVSDLGLSDYDASQLTANKVTSDFFEKAVALGGDAKQVSNWLQGEVAQFLNAEGKTLEQIELTPENLVEMIAIIEDGTISSKIAKKVFVHLAKNGGGAREYVEKAGMVQISDPAILIPIIHQVFADNEAAVADFKSGKRNADKAFTGFLMKATKGQANPQVALKLLAQELAKLKEN</sequence>
<accession>C1CCJ9</accession>
<proteinExistence type="inferred from homology"/>
<dbReference type="EC" id="6.3.5.-" evidence="1"/>
<dbReference type="EMBL" id="CP000919">
    <property type="protein sequence ID" value="ACO20113.1"/>
    <property type="molecule type" value="Genomic_DNA"/>
</dbReference>
<dbReference type="RefSeq" id="WP_001008681.1">
    <property type="nucleotide sequence ID" value="NC_012466.1"/>
</dbReference>
<dbReference type="SMR" id="C1CCJ9"/>
<dbReference type="KEGG" id="sjj:SPJ_0420"/>
<dbReference type="HOGENOM" id="CLU_019240_0_0_9"/>
<dbReference type="Proteomes" id="UP000002206">
    <property type="component" value="Chromosome"/>
</dbReference>
<dbReference type="GO" id="GO:0050566">
    <property type="term" value="F:asparaginyl-tRNA synthase (glutamine-hydrolyzing) activity"/>
    <property type="evidence" value="ECO:0007669"/>
    <property type="project" value="RHEA"/>
</dbReference>
<dbReference type="GO" id="GO:0005524">
    <property type="term" value="F:ATP binding"/>
    <property type="evidence" value="ECO:0007669"/>
    <property type="project" value="UniProtKB-KW"/>
</dbReference>
<dbReference type="GO" id="GO:0050567">
    <property type="term" value="F:glutaminyl-tRNA synthase (glutamine-hydrolyzing) activity"/>
    <property type="evidence" value="ECO:0007669"/>
    <property type="project" value="UniProtKB-UniRule"/>
</dbReference>
<dbReference type="GO" id="GO:0070681">
    <property type="term" value="P:glutaminyl-tRNAGln biosynthesis via transamidation"/>
    <property type="evidence" value="ECO:0007669"/>
    <property type="project" value="TreeGrafter"/>
</dbReference>
<dbReference type="GO" id="GO:0006412">
    <property type="term" value="P:translation"/>
    <property type="evidence" value="ECO:0007669"/>
    <property type="project" value="UniProtKB-UniRule"/>
</dbReference>
<dbReference type="FunFam" id="1.10.10.410:FF:000001">
    <property type="entry name" value="Aspartyl/glutamyl-tRNA(Asn/Gln) amidotransferase subunit B"/>
    <property type="match status" value="1"/>
</dbReference>
<dbReference type="FunFam" id="1.10.150.380:FF:000001">
    <property type="entry name" value="Aspartyl/glutamyl-tRNA(Asn/Gln) amidotransferase subunit B"/>
    <property type="match status" value="1"/>
</dbReference>
<dbReference type="Gene3D" id="1.10.10.410">
    <property type="match status" value="1"/>
</dbReference>
<dbReference type="Gene3D" id="1.10.150.380">
    <property type="entry name" value="GatB domain, N-terminal subdomain"/>
    <property type="match status" value="1"/>
</dbReference>
<dbReference type="HAMAP" id="MF_00121">
    <property type="entry name" value="GatB"/>
    <property type="match status" value="1"/>
</dbReference>
<dbReference type="InterPro" id="IPR017959">
    <property type="entry name" value="Asn/Gln-tRNA_amidoTrfase_suB/E"/>
</dbReference>
<dbReference type="InterPro" id="IPR006075">
    <property type="entry name" value="Asn/Gln-tRNA_Trfase_suB/E_cat"/>
</dbReference>
<dbReference type="InterPro" id="IPR018027">
    <property type="entry name" value="Asn/Gln_amidotransferase"/>
</dbReference>
<dbReference type="InterPro" id="IPR003789">
    <property type="entry name" value="Asn/Gln_tRNA_amidoTrase-B-like"/>
</dbReference>
<dbReference type="InterPro" id="IPR004413">
    <property type="entry name" value="GatB"/>
</dbReference>
<dbReference type="InterPro" id="IPR042114">
    <property type="entry name" value="GatB_C_1"/>
</dbReference>
<dbReference type="InterPro" id="IPR023168">
    <property type="entry name" value="GatB_Yqey_C_2"/>
</dbReference>
<dbReference type="InterPro" id="IPR017958">
    <property type="entry name" value="Gln-tRNA_amidoTrfase_suB_CS"/>
</dbReference>
<dbReference type="InterPro" id="IPR014746">
    <property type="entry name" value="Gln_synth/guanido_kin_cat_dom"/>
</dbReference>
<dbReference type="NCBIfam" id="TIGR00133">
    <property type="entry name" value="gatB"/>
    <property type="match status" value="1"/>
</dbReference>
<dbReference type="NCBIfam" id="NF004011">
    <property type="entry name" value="PRK05477.1-1"/>
    <property type="match status" value="1"/>
</dbReference>
<dbReference type="NCBIfam" id="NF004012">
    <property type="entry name" value="PRK05477.1-2"/>
    <property type="match status" value="1"/>
</dbReference>
<dbReference type="NCBIfam" id="NF004014">
    <property type="entry name" value="PRK05477.1-4"/>
    <property type="match status" value="1"/>
</dbReference>
<dbReference type="PANTHER" id="PTHR11659">
    <property type="entry name" value="GLUTAMYL-TRNA GLN AMIDOTRANSFERASE SUBUNIT B MITOCHONDRIAL AND PROKARYOTIC PET112-RELATED"/>
    <property type="match status" value="1"/>
</dbReference>
<dbReference type="PANTHER" id="PTHR11659:SF0">
    <property type="entry name" value="GLUTAMYL-TRNA(GLN) AMIDOTRANSFERASE SUBUNIT B, MITOCHONDRIAL"/>
    <property type="match status" value="1"/>
</dbReference>
<dbReference type="Pfam" id="PF02934">
    <property type="entry name" value="GatB_N"/>
    <property type="match status" value="1"/>
</dbReference>
<dbReference type="Pfam" id="PF02637">
    <property type="entry name" value="GatB_Yqey"/>
    <property type="match status" value="1"/>
</dbReference>
<dbReference type="SMART" id="SM00845">
    <property type="entry name" value="GatB_Yqey"/>
    <property type="match status" value="1"/>
</dbReference>
<dbReference type="SUPFAM" id="SSF89095">
    <property type="entry name" value="GatB/YqeY motif"/>
    <property type="match status" value="1"/>
</dbReference>
<dbReference type="SUPFAM" id="SSF55931">
    <property type="entry name" value="Glutamine synthetase/guanido kinase"/>
    <property type="match status" value="1"/>
</dbReference>
<dbReference type="PROSITE" id="PS01234">
    <property type="entry name" value="GATB"/>
    <property type="match status" value="1"/>
</dbReference>
<name>GATB_STRZJ</name>
<organism>
    <name type="scientific">Streptococcus pneumoniae (strain JJA)</name>
    <dbReference type="NCBI Taxonomy" id="488222"/>
    <lineage>
        <taxon>Bacteria</taxon>
        <taxon>Bacillati</taxon>
        <taxon>Bacillota</taxon>
        <taxon>Bacilli</taxon>
        <taxon>Lactobacillales</taxon>
        <taxon>Streptococcaceae</taxon>
        <taxon>Streptococcus</taxon>
    </lineage>
</organism>
<protein>
    <recommendedName>
        <fullName evidence="1">Aspartyl/glutamyl-tRNA(Asn/Gln) amidotransferase subunit B</fullName>
        <shortName evidence="1">Asp/Glu-ADT subunit B</shortName>
        <ecNumber evidence="1">6.3.5.-</ecNumber>
    </recommendedName>
</protein>
<keyword id="KW-0067">ATP-binding</keyword>
<keyword id="KW-0436">Ligase</keyword>
<keyword id="KW-0547">Nucleotide-binding</keyword>
<keyword id="KW-0648">Protein biosynthesis</keyword>